<reference key="1">
    <citation type="journal article" date="1996" name="Gene">
        <title>Isolation of Xenopus laevis TFIID subunit p22 reveals two distinct structural regions.</title>
        <authorList>
            <person name="Hasegawa S."/>
            <person name="Choi B.-I."/>
            <person name="Horikoshi M."/>
        </authorList>
    </citation>
    <scope>NUCLEOTIDE SEQUENCE [MRNA]</scope>
</reference>
<reference key="2">
    <citation type="submission" date="2004-04" db="EMBL/GenBank/DDBJ databases">
        <authorList>
            <consortium name="NIH - Xenopus Gene Collection (XGC) project"/>
        </authorList>
    </citation>
    <scope>NUCLEOTIDE SEQUENCE [LARGE SCALE MRNA]</scope>
    <source>
        <tissue>Lung</tissue>
    </source>
</reference>
<proteinExistence type="evidence at transcript level"/>
<protein>
    <recommendedName>
        <fullName>Transcription initiation factor TFIID subunit 12</fullName>
    </recommendedName>
    <alternativeName>
        <fullName>TFIID subunit p22</fullName>
    </alternativeName>
    <alternativeName>
        <fullName>Transcription initiation factor TFIID 20/15 kDa subunits</fullName>
        <shortName>TAFII-20/TAFII-15</shortName>
        <shortName>TAFII20/TAFII15</shortName>
    </alternativeName>
</protein>
<dbReference type="EMBL" id="D63522">
    <property type="protein sequence ID" value="BAA09789.1"/>
    <property type="molecule type" value="mRNA"/>
</dbReference>
<dbReference type="EMBL" id="BC068646">
    <property type="protein sequence ID" value="AAH68646.1"/>
    <property type="molecule type" value="mRNA"/>
</dbReference>
<dbReference type="PIR" id="JC4675">
    <property type="entry name" value="JC4675"/>
</dbReference>
<dbReference type="RefSeq" id="NP_001081155.1">
    <molecule id="Q91858-1"/>
    <property type="nucleotide sequence ID" value="NM_001087686.1"/>
</dbReference>
<dbReference type="RefSeq" id="XP_018100341.1">
    <molecule id="Q91858-1"/>
    <property type="nucleotide sequence ID" value="XM_018244852.1"/>
</dbReference>
<dbReference type="SMR" id="Q91858"/>
<dbReference type="DNASU" id="394417"/>
<dbReference type="GeneID" id="394417"/>
<dbReference type="KEGG" id="xla:394417"/>
<dbReference type="AGR" id="Xenbase:XB-GENE-943299"/>
<dbReference type="CTD" id="394417"/>
<dbReference type="Xenbase" id="XB-GENE-943299">
    <property type="gene designation" value="taf12.L"/>
</dbReference>
<dbReference type="OrthoDB" id="2193432at2759"/>
<dbReference type="Proteomes" id="UP000186698">
    <property type="component" value="Chromosome 2L"/>
</dbReference>
<dbReference type="Bgee" id="394417">
    <property type="expression patterns" value="Expressed in oocyte and 19 other cell types or tissues"/>
</dbReference>
<dbReference type="GO" id="GO:0000124">
    <property type="term" value="C:SAGA complex"/>
    <property type="evidence" value="ECO:0007669"/>
    <property type="project" value="InterPro"/>
</dbReference>
<dbReference type="GO" id="GO:0005669">
    <property type="term" value="C:transcription factor TFIID complex"/>
    <property type="evidence" value="ECO:0000318"/>
    <property type="project" value="GO_Central"/>
</dbReference>
<dbReference type="GO" id="GO:0003677">
    <property type="term" value="F:DNA binding"/>
    <property type="evidence" value="ECO:0000318"/>
    <property type="project" value="GO_Central"/>
</dbReference>
<dbReference type="GO" id="GO:0046982">
    <property type="term" value="F:protein heterodimerization activity"/>
    <property type="evidence" value="ECO:0007669"/>
    <property type="project" value="InterPro"/>
</dbReference>
<dbReference type="GO" id="GO:0017025">
    <property type="term" value="F:TBP-class protein binding"/>
    <property type="evidence" value="ECO:0000318"/>
    <property type="project" value="GO_Central"/>
</dbReference>
<dbReference type="GO" id="GO:0051123">
    <property type="term" value="P:RNA polymerase II preinitiation complex assembly"/>
    <property type="evidence" value="ECO:0000318"/>
    <property type="project" value="GO_Central"/>
</dbReference>
<dbReference type="CDD" id="cd07981">
    <property type="entry name" value="HFD_TAF12"/>
    <property type="match status" value="1"/>
</dbReference>
<dbReference type="FunFam" id="1.10.20.10:FF:000011">
    <property type="entry name" value="Transcription initiation factor TFIID subunit 12"/>
    <property type="match status" value="1"/>
</dbReference>
<dbReference type="Gene3D" id="1.10.20.10">
    <property type="entry name" value="Histone, subunit A"/>
    <property type="match status" value="1"/>
</dbReference>
<dbReference type="InterPro" id="IPR009072">
    <property type="entry name" value="Histone-fold"/>
</dbReference>
<dbReference type="InterPro" id="IPR037794">
    <property type="entry name" value="TAF12"/>
</dbReference>
<dbReference type="InterPro" id="IPR003228">
    <property type="entry name" value="TFIID_TAF12_dom"/>
</dbReference>
<dbReference type="PANTHER" id="PTHR12264">
    <property type="entry name" value="TRANSCRIPTION INITIATION FACTOR TFIID SUBUNIT 12"/>
    <property type="match status" value="1"/>
</dbReference>
<dbReference type="PANTHER" id="PTHR12264:SF21">
    <property type="entry name" value="TRANSCRIPTION INITIATION FACTOR TFIID SUBUNIT 12"/>
    <property type="match status" value="1"/>
</dbReference>
<dbReference type="Pfam" id="PF03847">
    <property type="entry name" value="TFIID_20kDa"/>
    <property type="match status" value="1"/>
</dbReference>
<dbReference type="SUPFAM" id="SSF47113">
    <property type="entry name" value="Histone-fold"/>
    <property type="match status" value="1"/>
</dbReference>
<evidence type="ECO:0000250" key="1">
    <source>
        <dbReference type="UniProtKB" id="Q16514"/>
    </source>
</evidence>
<evidence type="ECO:0000256" key="2">
    <source>
        <dbReference type="SAM" id="MobiDB-lite"/>
    </source>
</evidence>
<evidence type="ECO:0000305" key="3"/>
<name>TAF12_XENLA</name>
<sequence>MNQFGASALINLSSFSSSTTPSPTSVAVKQEPAMANSTPVGKVPVPTAGGGRASPEANQVLSKKKLHDLVREVDPNEQLDEDVEEMLLQIADDFIESVVSAACQLARHRKSNTLEVKDVQLHLERQWNMWIPGFGSEEIRPYKKACTTEAHKQRMALIKKTQKK</sequence>
<feature type="chain" id="PRO_0000033582" description="Transcription initiation factor TFIID subunit 12">
    <location>
        <begin position="1"/>
        <end position="164"/>
    </location>
</feature>
<feature type="domain" description="Histone-fold" evidence="3">
    <location>
        <begin position="59"/>
        <end position="131"/>
    </location>
</feature>
<feature type="region of interest" description="Disordered" evidence="2">
    <location>
        <begin position="14"/>
        <end position="56"/>
    </location>
</feature>
<feature type="compositionally biased region" description="Low complexity" evidence="2">
    <location>
        <begin position="14"/>
        <end position="25"/>
    </location>
</feature>
<feature type="splice variant" id="VSP_018889" description="In isoform TAFII15." evidence="3">
    <location>
        <begin position="1"/>
        <end position="33"/>
    </location>
</feature>
<organism>
    <name type="scientific">Xenopus laevis</name>
    <name type="common">African clawed frog</name>
    <dbReference type="NCBI Taxonomy" id="8355"/>
    <lineage>
        <taxon>Eukaryota</taxon>
        <taxon>Metazoa</taxon>
        <taxon>Chordata</taxon>
        <taxon>Craniata</taxon>
        <taxon>Vertebrata</taxon>
        <taxon>Euteleostomi</taxon>
        <taxon>Amphibia</taxon>
        <taxon>Batrachia</taxon>
        <taxon>Anura</taxon>
        <taxon>Pipoidea</taxon>
        <taxon>Pipidae</taxon>
        <taxon>Xenopodinae</taxon>
        <taxon>Xenopus</taxon>
        <taxon>Xenopus</taxon>
    </lineage>
</organism>
<gene>
    <name type="primary">taf12</name>
</gene>
<comment type="function">
    <text evidence="1">The TFIID basal transcription factor complex plays a major role in the initiation of RNA polymerase II (Pol II)-dependent transcription. TFIID recognizes and binds promoters via its subunit tbp, a TATA-box-binding protein, and promotes assembly of the pre-initiation complex (PIC). The TFIID complex consists of tbp and TBP-associated factors (TAFs).</text>
</comment>
<comment type="subunit">
    <text evidence="1">Component of the TFIID basal transcription factor complex, composed of TATA-box-binding protein tbp, and a number of TBP-associated factors (TAFs). Component of the TATA-binding protein-free TAF complex (TFTC), the PCAF histone acetylase complex and the STAGA transcription coactivator-HAT complex.</text>
</comment>
<comment type="subcellular location">
    <subcellularLocation>
        <location>Nucleus</location>
    </subcellularLocation>
</comment>
<comment type="alternative products">
    <event type="alternative initiation"/>
    <isoform>
        <id>Q91858-1</id>
        <name>TAFII20</name>
        <sequence type="displayed"/>
    </isoform>
    <isoform>
        <id>Q91858-2</id>
        <name>TAFII15</name>
        <sequence type="described" ref="VSP_018889"/>
    </isoform>
</comment>
<comment type="similarity">
    <text evidence="3">Belongs to the TAF12 family.</text>
</comment>
<accession>Q91858</accession>
<accession>Q5D033</accession>
<keyword id="KW-0024">Alternative initiation</keyword>
<keyword id="KW-0539">Nucleus</keyword>
<keyword id="KW-1185">Reference proteome</keyword>
<keyword id="KW-0804">Transcription</keyword>
<keyword id="KW-0805">Transcription regulation</keyword>